<organism>
    <name type="scientific">Aspergillus novofumigatus (strain IBT 16806)</name>
    <dbReference type="NCBI Taxonomy" id="1392255"/>
    <lineage>
        <taxon>Eukaryota</taxon>
        <taxon>Fungi</taxon>
        <taxon>Dikarya</taxon>
        <taxon>Ascomycota</taxon>
        <taxon>Pezizomycotina</taxon>
        <taxon>Eurotiomycetes</taxon>
        <taxon>Eurotiomycetidae</taxon>
        <taxon>Eurotiales</taxon>
        <taxon>Aspergillaceae</taxon>
        <taxon>Aspergillus</taxon>
        <taxon>Aspergillus subgen. Fumigati</taxon>
    </lineage>
</organism>
<evidence type="ECO:0000255" key="1"/>
<evidence type="ECO:0000269" key="2">
    <source>
    </source>
</evidence>
<evidence type="ECO:0000303" key="3">
    <source>
    </source>
</evidence>
<evidence type="ECO:0000305" key="4"/>
<feature type="chain" id="PRO_0000453087" description="Asnovolin H synthase nvfL">
    <location>
        <begin position="1"/>
        <end position="243"/>
    </location>
</feature>
<feature type="transmembrane region" description="Helical" evidence="1">
    <location>
        <begin position="20"/>
        <end position="42"/>
    </location>
</feature>
<feature type="transmembrane region" description="Helical" evidence="1">
    <location>
        <begin position="51"/>
        <end position="71"/>
    </location>
</feature>
<feature type="transmembrane region" description="Helical" evidence="1">
    <location>
        <begin position="75"/>
        <end position="95"/>
    </location>
</feature>
<feature type="transmembrane region" description="Helical" evidence="1">
    <location>
        <begin position="112"/>
        <end position="132"/>
    </location>
</feature>
<feature type="transmembrane region" description="Helical" evidence="1">
    <location>
        <begin position="138"/>
        <end position="160"/>
    </location>
</feature>
<feature type="transmembrane region" description="Helical" evidence="1">
    <location>
        <begin position="169"/>
        <end position="189"/>
    </location>
</feature>
<feature type="transmembrane region" description="Helical" evidence="1">
    <location>
        <begin position="205"/>
        <end position="225"/>
    </location>
</feature>
<proteinExistence type="evidence at protein level"/>
<comment type="function">
    <text evidence="2">Terpene cyclase; part of the gene cluster that mediates the biosynthesis of novofumigatonin, a heavily oxygenated meroterpenoid containing a unique orthoester moiety (PubMed:29968715). The first step of the pathway is the synthesis of 3,5-dimethylorsellinic acid (DMOA) by the polyketide synthase nvfA via condensation of one acetyl-CoA starter unit with 3 malonyl-CoA units and 2 methylations (PubMed:29968715). DMOA is then converted to farnesyl-DMOA by the farnesyltransferase nvfB (PubMed:29968715). Epoxydation by FAD-dependent monooxygenase nvfK, followed by a protonation-initiated cyclization catalyzed by the terpene cyclase nvfL leads to the production of asnavolin H (PubMed:29968715). The short chain dehydrogenase nvfC then as a 3-OH dehydrogenase of asnovolin H to yield chemesin D (PubMed:29968715). There are two branches to synthesize asnovolin A from chemesin D (PubMed:29968715). In one branch, chemesin D undergoes Baeyer-Villiger oxidation by nvfH, methylation by nvfJ, and enoyl reduction by the nvfM D enoylreductase that reduces the double bond between C-5'and C-6', to form respectively asnovolin I, asnovolin K, and asnovolin A (PubMed:29968715). In the other branch, the methylation precedes the Baeyer-Villiger oxidation and the enoyl reduction to yield asnovolin A via the asnovolin J intermediate (PubMed:29968715). Asnovolin A is further converted to fumigatonoid A by the Fe(II)/2-oxoglutarate-dependent dioxygenase nvfI that catalyzes an endoperoxidation reaction (PubMed:29968715). The alpha/beta hydrolase nvfD then acts as an epimerase that converts fumigatonoid A to its C-5' epimer, which then undergoes spontaneous or nvfD-catalyzed lactonization (PubMed:29968715). The following step utilizes the ketoreductase nvfG to produce fumigatonoid B (PubMed:29968715). The dioxygenase nvfE further converts fumigatonoid B into fumigatonoid C (PubMed:29968715). Finally the Fe(II)/2-oxoglutarate-dependent dioxygenase nvfF catalyzes two rounds of oxidation to transform fumigatonoid C into the end product, novofumigatonin A (PubMed:29968715).</text>
</comment>
<comment type="catalytic activity">
    <reaction evidence="2">
        <text>(3R)-[(10S)-11-epoxyfarnesyl]-2,3,5-trimethyl-6-oxido-4-oxocyclohexa-1,5-diene-1-carboxylate + H(+) = asnovolin H</text>
        <dbReference type="Rhea" id="RHEA:67040"/>
        <dbReference type="ChEBI" id="CHEBI:15378"/>
        <dbReference type="ChEBI" id="CHEBI:156465"/>
        <dbReference type="ChEBI" id="CHEBI:167682"/>
    </reaction>
    <physiologicalReaction direction="left-to-right" evidence="2">
        <dbReference type="Rhea" id="RHEA:67041"/>
    </physiologicalReaction>
</comment>
<comment type="pathway">
    <text evidence="2">Secondary metabolite biosynthesis; terpenoid biosynthesis.</text>
</comment>
<comment type="subcellular location">
    <subcellularLocation>
        <location evidence="1">Membrane</location>
        <topology evidence="1">Multi-pass membrane protein</topology>
    </subcellularLocation>
</comment>
<comment type="disruption phenotype">
    <text evidence="2">Completely abolishes the production of novofumigatonin and asnovolin A.</text>
</comment>
<comment type="similarity">
    <text evidence="4">Belongs to the paxB family.</text>
</comment>
<name>NVFL_ASPN1</name>
<keyword id="KW-0413">Isomerase</keyword>
<keyword id="KW-0472">Membrane</keyword>
<keyword id="KW-1185">Reference proteome</keyword>
<keyword id="KW-0812">Transmembrane</keyword>
<keyword id="KW-1133">Transmembrane helix</keyword>
<reference key="1">
    <citation type="journal article" date="2018" name="Proc. Natl. Acad. Sci. U.S.A.">
        <title>Linking secondary metabolites to gene clusters through genome sequencing of six diverse Aspergillus species.</title>
        <authorList>
            <person name="Kjaerboelling I."/>
            <person name="Vesth T.C."/>
            <person name="Frisvad J.C."/>
            <person name="Nybo J.L."/>
            <person name="Theobald S."/>
            <person name="Kuo A."/>
            <person name="Bowyer P."/>
            <person name="Matsuda Y."/>
            <person name="Mondo S."/>
            <person name="Lyhne E.K."/>
            <person name="Kogle M.E."/>
            <person name="Clum A."/>
            <person name="Lipzen A."/>
            <person name="Salamov A."/>
            <person name="Ngan C.Y."/>
            <person name="Daum C."/>
            <person name="Chiniquy J."/>
            <person name="Barry K."/>
            <person name="LaButti K."/>
            <person name="Haridas S."/>
            <person name="Simmons B.A."/>
            <person name="Magnuson J.K."/>
            <person name="Mortensen U.H."/>
            <person name="Larsen T.O."/>
            <person name="Grigoriev I.V."/>
            <person name="Baker S.E."/>
            <person name="Andersen M.R."/>
        </authorList>
    </citation>
    <scope>NUCLEOTIDE SEQUENCE [LARGE SCALE GENOMIC DNA]</scope>
    <source>
        <strain>IBT 16806</strain>
    </source>
</reference>
<reference key="2">
    <citation type="journal article" date="2018" name="Nat. Commun.">
        <title>Novofumigatonin biosynthesis involves a non-heme iron-dependent endoperoxide isomerase for orthoester formation.</title>
        <authorList>
            <person name="Matsuda Y."/>
            <person name="Bai T."/>
            <person name="Phippen C.B.W."/>
            <person name="Noedvig C.S."/>
            <person name="Kjaerboelling I."/>
            <person name="Vesth T.C."/>
            <person name="Andersen M.R."/>
            <person name="Mortensen U.H."/>
            <person name="Gotfredsen C.H."/>
            <person name="Abe I."/>
            <person name="Larsen T.O."/>
        </authorList>
    </citation>
    <scope>FUNCTION</scope>
    <scope>DISRUPTION PHENOTYPE</scope>
    <scope>CATALYTIC ACTIVITY</scope>
    <scope>PATHWAY</scope>
</reference>
<protein>
    <recommendedName>
        <fullName evidence="3">Asnovolin H synthase nvfL</fullName>
        <ecNumber evidence="2">5.4.99.-</ecNumber>
    </recommendedName>
    <alternativeName>
        <fullName evidence="3">Novofumigatonin biosynthesis cluster protein L</fullName>
    </alternativeName>
    <alternativeName>
        <fullName evidence="3">Terpene cyclase nvfL</fullName>
    </alternativeName>
</protein>
<accession>A0A2I1BT01</accession>
<gene>
    <name evidence="3" type="primary">nvfL</name>
    <name type="ORF">P174DRAFT_380360</name>
</gene>
<sequence length="243" mass="27660">MDPWIALSSPLTSQTVEYVANTLRIMCAISWNISYMSMAYYSFRDKTYGNALIPLCNNIAWEFVYSFIHCPKLTFVRIENTGWFLLNIVVMYAAIKYSENEWKHAPLVQRNLPFIFAVGISAMIAGHLALAAQIGPRIAFVWSAKGCQLVLSTGALSQLLSRGSTRGGSYVVWLSRYLGTVFIDVMVTIRHVYRAAGPSWPSSPLLLWFMAVFHLLDWTYGFCFYHIRRQELVSEAAEKDKDK</sequence>
<dbReference type="EC" id="5.4.99.-" evidence="2"/>
<dbReference type="EMBL" id="MSZS01000014">
    <property type="protein sequence ID" value="PKX88476.1"/>
    <property type="molecule type" value="Genomic_DNA"/>
</dbReference>
<dbReference type="SMR" id="A0A2I1BT01"/>
<dbReference type="STRING" id="1392255.A0A2I1BT01"/>
<dbReference type="VEuPathDB" id="FungiDB:P174DRAFT_380360"/>
<dbReference type="OMA" id="RIMCAIS"/>
<dbReference type="OrthoDB" id="5294024at2759"/>
<dbReference type="UniPathway" id="UPA00213"/>
<dbReference type="Proteomes" id="UP000234474">
    <property type="component" value="Unassembled WGS sequence"/>
</dbReference>
<dbReference type="GO" id="GO:0016020">
    <property type="term" value="C:membrane"/>
    <property type="evidence" value="ECO:0007669"/>
    <property type="project" value="UniProtKB-SubCell"/>
</dbReference>
<dbReference type="GO" id="GO:0016853">
    <property type="term" value="F:isomerase activity"/>
    <property type="evidence" value="ECO:0007669"/>
    <property type="project" value="UniProtKB-KW"/>
</dbReference>
<dbReference type="GO" id="GO:0010333">
    <property type="term" value="F:terpene synthase activity"/>
    <property type="evidence" value="ECO:0000314"/>
    <property type="project" value="UniProt"/>
</dbReference>
<dbReference type="GO" id="GO:0140782">
    <property type="term" value="P:novofumigatonin biosynthetic process"/>
    <property type="evidence" value="ECO:0000314"/>
    <property type="project" value="GO_Central"/>
</dbReference>
<dbReference type="InterPro" id="IPR039020">
    <property type="entry name" value="PaxB-like"/>
</dbReference>
<dbReference type="PANTHER" id="PTHR42038">
    <property type="match status" value="1"/>
</dbReference>
<dbReference type="PANTHER" id="PTHR42038:SF2">
    <property type="entry name" value="TERPENE CYCLASE AUSL"/>
    <property type="match status" value="1"/>
</dbReference>
<dbReference type="Pfam" id="PF25129">
    <property type="entry name" value="Pyr4-TMTC"/>
    <property type="match status" value="1"/>
</dbReference>